<sequence length="316" mass="34972">MTMYAKNNTAGKDMLSLLEWNKEELTDIIKLAVAMKTNPAHYSHILSGKILGMIFDKPSTRTRVSFEAGILQLGGQAIVMSSKELQIGRGEPIKDTAHVMSEYIDAIMIRTFSHEKVEELAYHAEIPIINGLTDLHHPCQALADLMTIYEWKDQLEGVKLAYIGDGNNVCHSLLLAGAMVGLDIRLAMPKGYEVDETILATAENLAKESGAKIFVTVDPKHAVADADFIYTDVWTSMGQEEENAKRLADFGEKYQVNAELASVAKPDYHFLHCLPAHREEEVTAEIIDGNHSVIYQQAGNRLHAQKALLAAILEAK</sequence>
<dbReference type="EC" id="2.1.3.3" evidence="2"/>
<dbReference type="EMBL" id="CP001175">
    <property type="protein sequence ID" value="ACK39323.1"/>
    <property type="molecule type" value="Genomic_DNA"/>
</dbReference>
<dbReference type="RefSeq" id="WP_012581247.1">
    <property type="nucleotide sequence ID" value="NC_011660.1"/>
</dbReference>
<dbReference type="SMR" id="B8DHF4"/>
<dbReference type="KEGG" id="lmh:LMHCC_0975"/>
<dbReference type="HOGENOM" id="CLU_043846_3_2_9"/>
<dbReference type="UniPathway" id="UPA00254">
    <property type="reaction ID" value="UER00365"/>
</dbReference>
<dbReference type="GO" id="GO:0005737">
    <property type="term" value="C:cytoplasm"/>
    <property type="evidence" value="ECO:0007669"/>
    <property type="project" value="UniProtKB-SubCell"/>
</dbReference>
<dbReference type="GO" id="GO:0016597">
    <property type="term" value="F:amino acid binding"/>
    <property type="evidence" value="ECO:0007669"/>
    <property type="project" value="InterPro"/>
</dbReference>
<dbReference type="GO" id="GO:0004585">
    <property type="term" value="F:ornithine carbamoyltransferase activity"/>
    <property type="evidence" value="ECO:0007669"/>
    <property type="project" value="UniProtKB-UniRule"/>
</dbReference>
<dbReference type="GO" id="GO:0042450">
    <property type="term" value="P:arginine biosynthetic process via ornithine"/>
    <property type="evidence" value="ECO:0007669"/>
    <property type="project" value="TreeGrafter"/>
</dbReference>
<dbReference type="GO" id="GO:0019547">
    <property type="term" value="P:arginine catabolic process to ornithine"/>
    <property type="evidence" value="ECO:0007669"/>
    <property type="project" value="UniProtKB-UniRule"/>
</dbReference>
<dbReference type="GO" id="GO:0019240">
    <property type="term" value="P:citrulline biosynthetic process"/>
    <property type="evidence" value="ECO:0007669"/>
    <property type="project" value="TreeGrafter"/>
</dbReference>
<dbReference type="FunFam" id="3.40.50.1370:FF:000008">
    <property type="entry name" value="Ornithine carbamoyltransferase"/>
    <property type="match status" value="1"/>
</dbReference>
<dbReference type="FunFam" id="3.40.50.1370:FF:000016">
    <property type="entry name" value="Ornithine carbamoyltransferase"/>
    <property type="match status" value="1"/>
</dbReference>
<dbReference type="Gene3D" id="3.40.50.1370">
    <property type="entry name" value="Aspartate/ornithine carbamoyltransferase"/>
    <property type="match status" value="2"/>
</dbReference>
<dbReference type="HAMAP" id="MF_01109">
    <property type="entry name" value="OTCase"/>
    <property type="match status" value="1"/>
</dbReference>
<dbReference type="InterPro" id="IPR006132">
    <property type="entry name" value="Asp/Orn_carbamoyltranf_P-bd"/>
</dbReference>
<dbReference type="InterPro" id="IPR006130">
    <property type="entry name" value="Asp/Orn_carbamoylTrfase"/>
</dbReference>
<dbReference type="InterPro" id="IPR036901">
    <property type="entry name" value="Asp/Orn_carbamoylTrfase_sf"/>
</dbReference>
<dbReference type="InterPro" id="IPR006131">
    <property type="entry name" value="Asp_carbamoyltransf_Asp/Orn-bd"/>
</dbReference>
<dbReference type="InterPro" id="IPR002292">
    <property type="entry name" value="Orn/put_carbamltrans"/>
</dbReference>
<dbReference type="InterPro" id="IPR024904">
    <property type="entry name" value="OTCase_ArgI"/>
</dbReference>
<dbReference type="NCBIfam" id="TIGR00658">
    <property type="entry name" value="orni_carb_tr"/>
    <property type="match status" value="1"/>
</dbReference>
<dbReference type="NCBIfam" id="NF001986">
    <property type="entry name" value="PRK00779.1"/>
    <property type="match status" value="1"/>
</dbReference>
<dbReference type="PANTHER" id="PTHR45753">
    <property type="entry name" value="ORNITHINE CARBAMOYLTRANSFERASE, MITOCHONDRIAL"/>
    <property type="match status" value="1"/>
</dbReference>
<dbReference type="PANTHER" id="PTHR45753:SF3">
    <property type="entry name" value="ORNITHINE TRANSCARBAMYLASE, MITOCHONDRIAL"/>
    <property type="match status" value="1"/>
</dbReference>
<dbReference type="Pfam" id="PF00185">
    <property type="entry name" value="OTCace"/>
    <property type="match status" value="1"/>
</dbReference>
<dbReference type="Pfam" id="PF02729">
    <property type="entry name" value="OTCace_N"/>
    <property type="match status" value="1"/>
</dbReference>
<dbReference type="PRINTS" id="PR00100">
    <property type="entry name" value="AOTCASE"/>
</dbReference>
<dbReference type="PRINTS" id="PR00102">
    <property type="entry name" value="OTCASE"/>
</dbReference>
<dbReference type="SUPFAM" id="SSF53671">
    <property type="entry name" value="Aspartate/ornithine carbamoyltransferase"/>
    <property type="match status" value="1"/>
</dbReference>
<dbReference type="PROSITE" id="PS00097">
    <property type="entry name" value="CARBAMOYLTRANSFERASE"/>
    <property type="match status" value="1"/>
</dbReference>
<name>OTC_LISMH</name>
<feature type="chain" id="PRO_1000163974" description="Ornithine carbamoyltransferase">
    <location>
        <begin position="1"/>
        <end position="316"/>
    </location>
</feature>
<feature type="binding site" evidence="2">
    <location>
        <begin position="59"/>
        <end position="62"/>
    </location>
    <ligand>
        <name>carbamoyl phosphate</name>
        <dbReference type="ChEBI" id="CHEBI:58228"/>
    </ligand>
</feature>
<feature type="binding site" evidence="2">
    <location>
        <position position="86"/>
    </location>
    <ligand>
        <name>carbamoyl phosphate</name>
        <dbReference type="ChEBI" id="CHEBI:58228"/>
    </ligand>
</feature>
<feature type="binding site" evidence="2">
    <location>
        <position position="110"/>
    </location>
    <ligand>
        <name>carbamoyl phosphate</name>
        <dbReference type="ChEBI" id="CHEBI:58228"/>
    </ligand>
</feature>
<feature type="binding site" evidence="2">
    <location>
        <begin position="137"/>
        <end position="140"/>
    </location>
    <ligand>
        <name>carbamoyl phosphate</name>
        <dbReference type="ChEBI" id="CHEBI:58228"/>
    </ligand>
</feature>
<feature type="binding site" evidence="2">
    <location>
        <position position="168"/>
    </location>
    <ligand>
        <name>L-ornithine</name>
        <dbReference type="ChEBI" id="CHEBI:46911"/>
    </ligand>
</feature>
<feature type="binding site" evidence="2">
    <location>
        <position position="232"/>
    </location>
    <ligand>
        <name>L-ornithine</name>
        <dbReference type="ChEBI" id="CHEBI:46911"/>
    </ligand>
</feature>
<feature type="binding site" evidence="2">
    <location>
        <begin position="236"/>
        <end position="237"/>
    </location>
    <ligand>
        <name>L-ornithine</name>
        <dbReference type="ChEBI" id="CHEBI:46911"/>
    </ligand>
</feature>
<feature type="binding site" evidence="2">
    <location>
        <begin position="273"/>
        <end position="274"/>
    </location>
    <ligand>
        <name>carbamoyl phosphate</name>
        <dbReference type="ChEBI" id="CHEBI:58228"/>
    </ligand>
</feature>
<feature type="binding site" evidence="2">
    <location>
        <position position="301"/>
    </location>
    <ligand>
        <name>carbamoyl phosphate</name>
        <dbReference type="ChEBI" id="CHEBI:58228"/>
    </ligand>
</feature>
<keyword id="KW-0056">Arginine metabolism</keyword>
<keyword id="KW-0963">Cytoplasm</keyword>
<keyword id="KW-0808">Transferase</keyword>
<protein>
    <recommendedName>
        <fullName evidence="2">Ornithine carbamoyltransferase</fullName>
        <shortName evidence="2">OTCase</shortName>
        <ecNumber evidence="2">2.1.3.3</ecNumber>
    </recommendedName>
</protein>
<accession>B8DHF4</accession>
<proteinExistence type="inferred from homology"/>
<organism>
    <name type="scientific">Listeria monocytogenes serotype 4a (strain HCC23)</name>
    <dbReference type="NCBI Taxonomy" id="552536"/>
    <lineage>
        <taxon>Bacteria</taxon>
        <taxon>Bacillati</taxon>
        <taxon>Bacillota</taxon>
        <taxon>Bacilli</taxon>
        <taxon>Bacillales</taxon>
        <taxon>Listeriaceae</taxon>
        <taxon>Listeria</taxon>
    </lineage>
</organism>
<comment type="function">
    <text evidence="1">Reversibly catalyzes the transfer of the carbamoyl group from carbamoyl phosphate (CP) to the N(epsilon) atom of ornithine (ORN) to produce L-citrulline.</text>
</comment>
<comment type="catalytic activity">
    <reaction evidence="2">
        <text>carbamoyl phosphate + L-ornithine = L-citrulline + phosphate + H(+)</text>
        <dbReference type="Rhea" id="RHEA:19513"/>
        <dbReference type="ChEBI" id="CHEBI:15378"/>
        <dbReference type="ChEBI" id="CHEBI:43474"/>
        <dbReference type="ChEBI" id="CHEBI:46911"/>
        <dbReference type="ChEBI" id="CHEBI:57743"/>
        <dbReference type="ChEBI" id="CHEBI:58228"/>
        <dbReference type="EC" id="2.1.3.3"/>
    </reaction>
</comment>
<comment type="pathway">
    <text evidence="2">Amino-acid degradation; L-arginine degradation via ADI pathway; carbamoyl phosphate from L-arginine: step 2/2.</text>
</comment>
<comment type="subcellular location">
    <subcellularLocation>
        <location evidence="2">Cytoplasm</location>
    </subcellularLocation>
</comment>
<comment type="similarity">
    <text evidence="2">Belongs to the aspartate/ornithine carbamoyltransferase superfamily. OTCase family.</text>
</comment>
<reference key="1">
    <citation type="journal article" date="2011" name="J. Bacteriol.">
        <title>Genome sequence of lineage III Listeria monocytogenes strain HCC23.</title>
        <authorList>
            <person name="Steele C.L."/>
            <person name="Donaldson J.R."/>
            <person name="Paul D."/>
            <person name="Banes M.M."/>
            <person name="Arick T."/>
            <person name="Bridges S.M."/>
            <person name="Lawrence M.L."/>
        </authorList>
    </citation>
    <scope>NUCLEOTIDE SEQUENCE [LARGE SCALE GENOMIC DNA]</scope>
    <source>
        <strain>HCC23</strain>
    </source>
</reference>
<evidence type="ECO:0000250" key="1"/>
<evidence type="ECO:0000255" key="2">
    <source>
        <dbReference type="HAMAP-Rule" id="MF_01109"/>
    </source>
</evidence>
<gene>
    <name evidence="2" type="primary">arcB</name>
    <name type="ordered locus">LMHCC_0975</name>
</gene>